<evidence type="ECO:0000255" key="1">
    <source>
        <dbReference type="HAMAP-Rule" id="MF_00646"/>
    </source>
</evidence>
<reference key="1">
    <citation type="journal article" date="2003" name="Genome Res.">
        <title>Comparative genome analysis of Vibrio vulnificus, a marine pathogen.</title>
        <authorList>
            <person name="Chen C.-Y."/>
            <person name="Wu K.-M."/>
            <person name="Chang Y.-C."/>
            <person name="Chang C.-H."/>
            <person name="Tsai H.-C."/>
            <person name="Liao T.-L."/>
            <person name="Liu Y.-M."/>
            <person name="Chen H.-J."/>
            <person name="Shen A.B.-T."/>
            <person name="Li J.-C."/>
            <person name="Su T.-L."/>
            <person name="Shao C.-P."/>
            <person name="Lee C.-T."/>
            <person name="Hor L.-I."/>
            <person name="Tsai S.-F."/>
        </authorList>
    </citation>
    <scope>NUCLEOTIDE SEQUENCE [LARGE SCALE GENOMIC DNA]</scope>
    <source>
        <strain>YJ016</strain>
    </source>
</reference>
<name>EFPL_VIBVY</name>
<organism>
    <name type="scientific">Vibrio vulnificus (strain YJ016)</name>
    <dbReference type="NCBI Taxonomy" id="196600"/>
    <lineage>
        <taxon>Bacteria</taxon>
        <taxon>Pseudomonadati</taxon>
        <taxon>Pseudomonadota</taxon>
        <taxon>Gammaproteobacteria</taxon>
        <taxon>Vibrionales</taxon>
        <taxon>Vibrionaceae</taxon>
        <taxon>Vibrio</taxon>
    </lineage>
</organism>
<dbReference type="EMBL" id="BA000037">
    <property type="protein sequence ID" value="BAC93993.1"/>
    <property type="molecule type" value="Genomic_DNA"/>
</dbReference>
<dbReference type="SMR" id="Q7MM44"/>
<dbReference type="STRING" id="672.VV93_v1c11460"/>
<dbReference type="KEGG" id="vvy:VV1229"/>
<dbReference type="eggNOG" id="COG0231">
    <property type="taxonomic scope" value="Bacteria"/>
</dbReference>
<dbReference type="HOGENOM" id="CLU_074944_2_0_6"/>
<dbReference type="Proteomes" id="UP000002675">
    <property type="component" value="Chromosome I"/>
</dbReference>
<dbReference type="GO" id="GO:0005737">
    <property type="term" value="C:cytoplasm"/>
    <property type="evidence" value="ECO:0007669"/>
    <property type="project" value="InterPro"/>
</dbReference>
<dbReference type="GO" id="GO:0003746">
    <property type="term" value="F:translation elongation factor activity"/>
    <property type="evidence" value="ECO:0007669"/>
    <property type="project" value="UniProtKB-UniRule"/>
</dbReference>
<dbReference type="GO" id="GO:0043043">
    <property type="term" value="P:peptide biosynthetic process"/>
    <property type="evidence" value="ECO:0007669"/>
    <property type="project" value="InterPro"/>
</dbReference>
<dbReference type="CDD" id="cd04470">
    <property type="entry name" value="S1_EF-P_repeat_1"/>
    <property type="match status" value="1"/>
</dbReference>
<dbReference type="CDD" id="cd05794">
    <property type="entry name" value="S1_EF-P_repeat_2"/>
    <property type="match status" value="1"/>
</dbReference>
<dbReference type="FunFam" id="2.40.50.140:FF:000004">
    <property type="entry name" value="Elongation factor P"/>
    <property type="match status" value="1"/>
</dbReference>
<dbReference type="FunFam" id="2.30.30.30:FF:000011">
    <property type="entry name" value="Elongation factor P-like protein"/>
    <property type="match status" value="1"/>
</dbReference>
<dbReference type="Gene3D" id="2.30.30.30">
    <property type="match status" value="1"/>
</dbReference>
<dbReference type="Gene3D" id="2.40.50.140">
    <property type="entry name" value="Nucleic acid-binding proteins"/>
    <property type="match status" value="2"/>
</dbReference>
<dbReference type="HAMAP" id="MF_00646">
    <property type="entry name" value="EFP"/>
    <property type="match status" value="1"/>
</dbReference>
<dbReference type="InterPro" id="IPR015365">
    <property type="entry name" value="Elong-fact-P_C"/>
</dbReference>
<dbReference type="InterPro" id="IPR012340">
    <property type="entry name" value="NA-bd_OB-fold"/>
</dbReference>
<dbReference type="InterPro" id="IPR014722">
    <property type="entry name" value="Rib_uL2_dom2"/>
</dbReference>
<dbReference type="InterPro" id="IPR020599">
    <property type="entry name" value="Transl_elong_fac_P/YeiP"/>
</dbReference>
<dbReference type="InterPro" id="IPR013185">
    <property type="entry name" value="Transl_elong_KOW-like"/>
</dbReference>
<dbReference type="InterPro" id="IPR011897">
    <property type="entry name" value="Transl_elong_p-like_YeiP"/>
</dbReference>
<dbReference type="InterPro" id="IPR001059">
    <property type="entry name" value="Transl_elong_P/YeiP_cen"/>
</dbReference>
<dbReference type="InterPro" id="IPR013852">
    <property type="entry name" value="Transl_elong_P/YeiP_CS"/>
</dbReference>
<dbReference type="InterPro" id="IPR008991">
    <property type="entry name" value="Translation_prot_SH3-like_sf"/>
</dbReference>
<dbReference type="NCBIfam" id="NF001810">
    <property type="entry name" value="PRK00529.1"/>
    <property type="match status" value="1"/>
</dbReference>
<dbReference type="NCBIfam" id="NF003392">
    <property type="entry name" value="PRK04542.1"/>
    <property type="match status" value="1"/>
</dbReference>
<dbReference type="NCBIfam" id="TIGR02178">
    <property type="entry name" value="yeiP"/>
    <property type="match status" value="1"/>
</dbReference>
<dbReference type="PANTHER" id="PTHR30053">
    <property type="entry name" value="ELONGATION FACTOR P"/>
    <property type="match status" value="1"/>
</dbReference>
<dbReference type="PANTHER" id="PTHR30053:SF14">
    <property type="entry name" value="TRANSLATION ELONGATION FACTOR KOW-LIKE DOMAIN-CONTAINING PROTEIN"/>
    <property type="match status" value="1"/>
</dbReference>
<dbReference type="Pfam" id="PF01132">
    <property type="entry name" value="EFP"/>
    <property type="match status" value="1"/>
</dbReference>
<dbReference type="Pfam" id="PF08207">
    <property type="entry name" value="EFP_N"/>
    <property type="match status" value="1"/>
</dbReference>
<dbReference type="Pfam" id="PF09285">
    <property type="entry name" value="Elong-fact-P_C"/>
    <property type="match status" value="1"/>
</dbReference>
<dbReference type="PIRSF" id="PIRSF005901">
    <property type="entry name" value="EF-P"/>
    <property type="match status" value="1"/>
</dbReference>
<dbReference type="SMART" id="SM01185">
    <property type="entry name" value="EFP"/>
    <property type="match status" value="1"/>
</dbReference>
<dbReference type="SMART" id="SM00841">
    <property type="entry name" value="Elong-fact-P_C"/>
    <property type="match status" value="1"/>
</dbReference>
<dbReference type="SUPFAM" id="SSF50249">
    <property type="entry name" value="Nucleic acid-binding proteins"/>
    <property type="match status" value="2"/>
</dbReference>
<dbReference type="SUPFAM" id="SSF50104">
    <property type="entry name" value="Translation proteins SH3-like domain"/>
    <property type="match status" value="1"/>
</dbReference>
<dbReference type="PROSITE" id="PS01275">
    <property type="entry name" value="EFP"/>
    <property type="match status" value="1"/>
</dbReference>
<comment type="similarity">
    <text evidence="1">Belongs to the elongation factor P family.</text>
</comment>
<accession>Q7MM44</accession>
<sequence length="188" mass="20649">MPKASEIKKGFAIESNGKTLLVKDIEVTTPGGRGGSKIYKMRCTDLATGARVEERYKSDDVVETVEMNKKAVSFSYVDGDDYIFMDNADYSQYVFKHADVEDDLLFINEDTQGIHVILVNGESVGLELPSSVELVIEETDPSIKGASASARTKPARLSTGLVVQVPEYIATGDRVIINTAERKYMSRA</sequence>
<protein>
    <recommendedName>
        <fullName evidence="1">Elongation factor P-like protein</fullName>
    </recommendedName>
</protein>
<proteinExistence type="inferred from homology"/>
<gene>
    <name type="ordered locus">VV1229</name>
</gene>
<feature type="chain" id="PRO_0000094392" description="Elongation factor P-like protein">
    <location>
        <begin position="1"/>
        <end position="188"/>
    </location>
</feature>